<protein>
    <recommendedName>
        <fullName>Relaxin receptor 1</fullName>
    </recommendedName>
    <alternativeName>
        <fullName>Relaxin family peptide receptor 1</fullName>
    </alternativeName>
</protein>
<gene>
    <name type="primary">RXFP1</name>
</gene>
<organism>
    <name type="scientific">Pongo abelii</name>
    <name type="common">Sumatran orangutan</name>
    <name type="synonym">Pongo pygmaeus abelii</name>
    <dbReference type="NCBI Taxonomy" id="9601"/>
    <lineage>
        <taxon>Eukaryota</taxon>
        <taxon>Metazoa</taxon>
        <taxon>Chordata</taxon>
        <taxon>Craniata</taxon>
        <taxon>Vertebrata</taxon>
        <taxon>Euteleostomi</taxon>
        <taxon>Mammalia</taxon>
        <taxon>Eutheria</taxon>
        <taxon>Euarchontoglires</taxon>
        <taxon>Primates</taxon>
        <taxon>Haplorrhini</taxon>
        <taxon>Catarrhini</taxon>
        <taxon>Hominidae</taxon>
        <taxon>Pongo</taxon>
    </lineage>
</organism>
<reference key="1">
    <citation type="submission" date="2004-11" db="EMBL/GenBank/DDBJ databases">
        <authorList>
            <consortium name="The German cDNA consortium"/>
        </authorList>
    </citation>
    <scope>NUCLEOTIDE SEQUENCE [LARGE SCALE MRNA]</scope>
    <source>
        <tissue>Brain cortex</tissue>
    </source>
</reference>
<feature type="chain" id="PRO_0000312668" description="Relaxin receptor 1">
    <location>
        <begin position="1"/>
        <end position="757"/>
    </location>
</feature>
<feature type="topological domain" description="Extracellular" evidence="3">
    <location>
        <begin position="1"/>
        <end position="408"/>
    </location>
</feature>
<feature type="transmembrane region" description="Helical; Name=1" evidence="3">
    <location>
        <begin position="409"/>
        <end position="429"/>
    </location>
</feature>
<feature type="topological domain" description="Cytoplasmic" evidence="3">
    <location>
        <begin position="430"/>
        <end position="443"/>
    </location>
</feature>
<feature type="transmembrane region" description="Helical; Name=2" evidence="3">
    <location>
        <begin position="444"/>
        <end position="464"/>
    </location>
</feature>
<feature type="topological domain" description="Extracellular" evidence="3">
    <location>
        <begin position="465"/>
        <end position="486"/>
    </location>
</feature>
<feature type="transmembrane region" description="Helical; Name=3" evidence="3">
    <location>
        <begin position="487"/>
        <end position="507"/>
    </location>
</feature>
<feature type="topological domain" description="Cytoplasmic" evidence="3">
    <location>
        <begin position="508"/>
        <end position="527"/>
    </location>
</feature>
<feature type="transmembrane region" description="Helical; Name=4" evidence="3">
    <location>
        <begin position="528"/>
        <end position="548"/>
    </location>
</feature>
<feature type="topological domain" description="Extracellular" evidence="3">
    <location>
        <begin position="549"/>
        <end position="577"/>
    </location>
</feature>
<feature type="transmembrane region" description="Helical; Name=5" evidence="3">
    <location>
        <begin position="578"/>
        <end position="598"/>
    </location>
</feature>
<feature type="topological domain" description="Cytoplasmic" evidence="3">
    <location>
        <begin position="599"/>
        <end position="629"/>
    </location>
</feature>
<feature type="transmembrane region" description="Helical; Name=6" evidence="3">
    <location>
        <begin position="630"/>
        <end position="650"/>
    </location>
</feature>
<feature type="topological domain" description="Extracellular" evidence="3">
    <location>
        <begin position="651"/>
        <end position="660"/>
    </location>
</feature>
<feature type="transmembrane region" description="Helical; Name=7" evidence="3">
    <location>
        <begin position="661"/>
        <end position="681"/>
    </location>
</feature>
<feature type="topological domain" description="Cytoplasmic" evidence="3">
    <location>
        <begin position="682"/>
        <end position="757"/>
    </location>
</feature>
<feature type="domain" description="LDL-receptor class A" evidence="4">
    <location>
        <begin position="26"/>
        <end position="63"/>
    </location>
</feature>
<feature type="domain" description="LRRNT">
    <location>
        <begin position="91"/>
        <end position="127"/>
    </location>
</feature>
<feature type="repeat" description="LRR 1">
    <location>
        <begin position="151"/>
        <end position="172"/>
    </location>
</feature>
<feature type="repeat" description="LRR 2">
    <location>
        <begin position="175"/>
        <end position="196"/>
    </location>
</feature>
<feature type="repeat" description="LRR 3">
    <location>
        <begin position="199"/>
        <end position="220"/>
    </location>
</feature>
<feature type="repeat" description="LRR 4">
    <location>
        <begin position="223"/>
        <end position="244"/>
    </location>
</feature>
<feature type="repeat" description="LRR 5">
    <location>
        <begin position="248"/>
        <end position="269"/>
    </location>
</feature>
<feature type="repeat" description="LRR 6">
    <location>
        <begin position="272"/>
        <end position="293"/>
    </location>
</feature>
<feature type="repeat" description="LRR 7">
    <location>
        <begin position="296"/>
        <end position="317"/>
    </location>
</feature>
<feature type="repeat" description="LRR 8">
    <location>
        <begin position="320"/>
        <end position="341"/>
    </location>
</feature>
<feature type="repeat" description="LRR 9">
    <location>
        <begin position="344"/>
        <end position="365"/>
    </location>
</feature>
<feature type="binding site" evidence="1">
    <location>
        <position position="45"/>
    </location>
    <ligand>
        <name>Ca(2+)</name>
        <dbReference type="ChEBI" id="CHEBI:29108"/>
    </ligand>
</feature>
<feature type="binding site" evidence="1">
    <location>
        <position position="48"/>
    </location>
    <ligand>
        <name>Ca(2+)</name>
        <dbReference type="ChEBI" id="CHEBI:29108"/>
    </ligand>
</feature>
<feature type="binding site" evidence="1">
    <location>
        <position position="50"/>
    </location>
    <ligand>
        <name>Ca(2+)</name>
        <dbReference type="ChEBI" id="CHEBI:29108"/>
    </ligand>
</feature>
<feature type="binding site" evidence="1">
    <location>
        <position position="52"/>
    </location>
    <ligand>
        <name>Ca(2+)</name>
        <dbReference type="ChEBI" id="CHEBI:29108"/>
    </ligand>
</feature>
<feature type="binding site" evidence="1">
    <location>
        <position position="58"/>
    </location>
    <ligand>
        <name>Ca(2+)</name>
        <dbReference type="ChEBI" id="CHEBI:29108"/>
    </ligand>
</feature>
<feature type="binding site" evidence="1">
    <location>
        <position position="59"/>
    </location>
    <ligand>
        <name>Ca(2+)</name>
        <dbReference type="ChEBI" id="CHEBI:29108"/>
    </ligand>
</feature>
<feature type="glycosylation site" description="N-linked (GlcNAc...) asparagine" evidence="3">
    <location>
        <position position="36"/>
    </location>
</feature>
<feature type="glycosylation site" description="N-linked (GlcNAc...) asparagine" evidence="3">
    <location>
        <position position="127"/>
    </location>
</feature>
<feature type="glycosylation site" description="N-linked (GlcNAc...) asparagine" evidence="3">
    <location>
        <position position="264"/>
    </location>
</feature>
<feature type="glycosylation site" description="N-linked (GlcNAc...) asparagine" evidence="3">
    <location>
        <position position="272"/>
    </location>
</feature>
<feature type="glycosylation site" description="N-linked (GlcNAc...) asparagine" evidence="3">
    <location>
        <position position="325"/>
    </location>
</feature>
<feature type="glycosylation site" description="N-linked (GlcNAc...) asparagine" evidence="3">
    <location>
        <position position="368"/>
    </location>
</feature>
<feature type="disulfide bond" evidence="1">
    <location>
        <begin position="27"/>
        <end position="40"/>
    </location>
</feature>
<feature type="disulfide bond" evidence="1">
    <location>
        <begin position="34"/>
        <end position="53"/>
    </location>
</feature>
<feature type="disulfide bond" evidence="1">
    <location>
        <begin position="47"/>
        <end position="62"/>
    </location>
</feature>
<feature type="disulfide bond" evidence="1">
    <location>
        <begin position="485"/>
        <end position="563"/>
    </location>
</feature>
<evidence type="ECO:0000250" key="1"/>
<evidence type="ECO:0000250" key="2">
    <source>
        <dbReference type="UniProtKB" id="Q9HBX9"/>
    </source>
</evidence>
<evidence type="ECO:0000255" key="3"/>
<evidence type="ECO:0000255" key="4">
    <source>
        <dbReference type="PROSITE-ProRule" id="PRU00124"/>
    </source>
</evidence>
<evidence type="ECO:0000255" key="5">
    <source>
        <dbReference type="PROSITE-ProRule" id="PRU00521"/>
    </source>
</evidence>
<name>RXFP1_PONAB</name>
<accession>Q5R5V8</accession>
<comment type="function">
    <text evidence="1">Receptor for relaxins. The activity of this receptor is mediated by G proteins leading to stimulation of adenylate cyclase and an increase of cAMP. Binding of the ligand may also activate a tyrosine kinase pathway that inhibits the activity of a phosphodiesterase that degrades cAMP (By similarity).</text>
</comment>
<comment type="subunit">
    <text evidence="2">Interacts with C1QTNF8.</text>
</comment>
<comment type="subcellular location">
    <subcellularLocation>
        <location evidence="1">Cell membrane</location>
        <topology evidence="1">Multi-pass membrane protein</topology>
    </subcellularLocation>
</comment>
<comment type="similarity">
    <text evidence="5">Belongs to the G-protein coupled receptor 1 family.</text>
</comment>
<proteinExistence type="evidence at transcript level"/>
<dbReference type="EMBL" id="CR860744">
    <property type="protein sequence ID" value="CAH92858.1"/>
    <property type="molecule type" value="mRNA"/>
</dbReference>
<dbReference type="RefSeq" id="NP_001126672.1">
    <property type="nucleotide sequence ID" value="NM_001133200.1"/>
</dbReference>
<dbReference type="SMR" id="Q5R5V8"/>
<dbReference type="FunCoup" id="Q5R5V8">
    <property type="interactions" value="896"/>
</dbReference>
<dbReference type="STRING" id="9601.ENSPPYP00000016938"/>
<dbReference type="GlyCosmos" id="Q5R5V8">
    <property type="glycosylation" value="6 sites, No reported glycans"/>
</dbReference>
<dbReference type="GeneID" id="100173672"/>
<dbReference type="KEGG" id="pon:100173672"/>
<dbReference type="CTD" id="59350"/>
<dbReference type="eggNOG" id="KOG0619">
    <property type="taxonomic scope" value="Eukaryota"/>
</dbReference>
<dbReference type="eggNOG" id="KOG2087">
    <property type="taxonomic scope" value="Eukaryota"/>
</dbReference>
<dbReference type="InParanoid" id="Q5R5V8"/>
<dbReference type="OrthoDB" id="6022531at2759"/>
<dbReference type="Proteomes" id="UP000001595">
    <property type="component" value="Unplaced"/>
</dbReference>
<dbReference type="GO" id="GO:0005886">
    <property type="term" value="C:plasma membrane"/>
    <property type="evidence" value="ECO:0007669"/>
    <property type="project" value="UniProtKB-SubCell"/>
</dbReference>
<dbReference type="GO" id="GO:0008528">
    <property type="term" value="F:G protein-coupled peptide receptor activity"/>
    <property type="evidence" value="ECO:0007669"/>
    <property type="project" value="TreeGrafter"/>
</dbReference>
<dbReference type="GO" id="GO:0046872">
    <property type="term" value="F:metal ion binding"/>
    <property type="evidence" value="ECO:0007669"/>
    <property type="project" value="UniProtKB-KW"/>
</dbReference>
<dbReference type="GO" id="GO:0007189">
    <property type="term" value="P:adenylate cyclase-activating G protein-coupled receptor signaling pathway"/>
    <property type="evidence" value="ECO:0007669"/>
    <property type="project" value="TreeGrafter"/>
</dbReference>
<dbReference type="GO" id="GO:0009755">
    <property type="term" value="P:hormone-mediated signaling pathway"/>
    <property type="evidence" value="ECO:0007669"/>
    <property type="project" value="TreeGrafter"/>
</dbReference>
<dbReference type="CDD" id="cd15965">
    <property type="entry name" value="7tmA_RXFP1_LGR7"/>
    <property type="match status" value="1"/>
</dbReference>
<dbReference type="CDD" id="cd00112">
    <property type="entry name" value="LDLa"/>
    <property type="match status" value="1"/>
</dbReference>
<dbReference type="FunFam" id="1.20.1070.10:FF:000023">
    <property type="entry name" value="Relaxin family peptide receptor 1"/>
    <property type="match status" value="1"/>
</dbReference>
<dbReference type="FunFam" id="3.80.10.10:FF:000162">
    <property type="entry name" value="Relaxin family peptide receptor 1"/>
    <property type="match status" value="1"/>
</dbReference>
<dbReference type="FunFam" id="3.80.10.10:FF:000203">
    <property type="entry name" value="Relaxin family peptide receptor 1"/>
    <property type="match status" value="1"/>
</dbReference>
<dbReference type="FunFam" id="4.10.400.10:FF:000014">
    <property type="entry name" value="Relaxin family peptide receptor 1"/>
    <property type="match status" value="1"/>
</dbReference>
<dbReference type="Gene3D" id="4.10.400.10">
    <property type="entry name" value="Low-density Lipoprotein Receptor"/>
    <property type="match status" value="1"/>
</dbReference>
<dbReference type="Gene3D" id="1.20.1070.10">
    <property type="entry name" value="Rhodopsin 7-helix transmembrane proteins"/>
    <property type="match status" value="1"/>
</dbReference>
<dbReference type="Gene3D" id="3.80.10.10">
    <property type="entry name" value="Ribonuclease Inhibitor"/>
    <property type="match status" value="2"/>
</dbReference>
<dbReference type="InterPro" id="IPR000276">
    <property type="entry name" value="GPCR_Rhodpsn"/>
</dbReference>
<dbReference type="InterPro" id="IPR017452">
    <property type="entry name" value="GPCR_Rhodpsn_7TM"/>
</dbReference>
<dbReference type="InterPro" id="IPR036055">
    <property type="entry name" value="LDL_receptor-like_sf"/>
</dbReference>
<dbReference type="InterPro" id="IPR023415">
    <property type="entry name" value="LDLR_class-A_CS"/>
</dbReference>
<dbReference type="InterPro" id="IPR002172">
    <property type="entry name" value="LDrepeatLR_classA_rpt"/>
</dbReference>
<dbReference type="InterPro" id="IPR001611">
    <property type="entry name" value="Leu-rich_rpt"/>
</dbReference>
<dbReference type="InterPro" id="IPR003591">
    <property type="entry name" value="Leu-rich_rpt_typical-subtyp"/>
</dbReference>
<dbReference type="InterPro" id="IPR032675">
    <property type="entry name" value="LRR_dom_sf"/>
</dbReference>
<dbReference type="InterPro" id="IPR008112">
    <property type="entry name" value="Relaxin_rcpt"/>
</dbReference>
<dbReference type="PANTHER" id="PTHR24372">
    <property type="entry name" value="GLYCOPROTEIN HORMONE RECEPTOR"/>
    <property type="match status" value="1"/>
</dbReference>
<dbReference type="PANTHER" id="PTHR24372:SF68">
    <property type="entry name" value="RELAXIN RECEPTOR 1"/>
    <property type="match status" value="1"/>
</dbReference>
<dbReference type="Pfam" id="PF00001">
    <property type="entry name" value="7tm_1"/>
    <property type="match status" value="1"/>
</dbReference>
<dbReference type="Pfam" id="PF00057">
    <property type="entry name" value="Ldl_recept_a"/>
    <property type="match status" value="1"/>
</dbReference>
<dbReference type="Pfam" id="PF13855">
    <property type="entry name" value="LRR_8"/>
    <property type="match status" value="2"/>
</dbReference>
<dbReference type="PRINTS" id="PR00237">
    <property type="entry name" value="GPCRRHODOPSN"/>
</dbReference>
<dbReference type="PRINTS" id="PR01739">
    <property type="entry name" value="RELAXINR"/>
</dbReference>
<dbReference type="SMART" id="SM00192">
    <property type="entry name" value="LDLa"/>
    <property type="match status" value="1"/>
</dbReference>
<dbReference type="SMART" id="SM00365">
    <property type="entry name" value="LRR_SD22"/>
    <property type="match status" value="4"/>
</dbReference>
<dbReference type="SMART" id="SM00369">
    <property type="entry name" value="LRR_TYP"/>
    <property type="match status" value="9"/>
</dbReference>
<dbReference type="SUPFAM" id="SSF81321">
    <property type="entry name" value="Family A G protein-coupled receptor-like"/>
    <property type="match status" value="1"/>
</dbReference>
<dbReference type="SUPFAM" id="SSF52058">
    <property type="entry name" value="L domain-like"/>
    <property type="match status" value="1"/>
</dbReference>
<dbReference type="SUPFAM" id="SSF57424">
    <property type="entry name" value="LDL receptor-like module"/>
    <property type="match status" value="1"/>
</dbReference>
<dbReference type="PROSITE" id="PS50262">
    <property type="entry name" value="G_PROTEIN_RECEP_F1_2"/>
    <property type="match status" value="1"/>
</dbReference>
<dbReference type="PROSITE" id="PS01209">
    <property type="entry name" value="LDLRA_1"/>
    <property type="match status" value="1"/>
</dbReference>
<dbReference type="PROSITE" id="PS50068">
    <property type="entry name" value="LDLRA_2"/>
    <property type="match status" value="1"/>
</dbReference>
<dbReference type="PROSITE" id="PS51450">
    <property type="entry name" value="LRR"/>
    <property type="match status" value="10"/>
</dbReference>
<sequence>MTSGSVFFYILIIGKYFSHGGGQDVKCSLGYFPCGNITKCLPQLLHCNGVDDCGNQADEDNCGDNNGWSLQFDKYFASYYKMTSQYPFEAETPECLVGSVPVQCLCRGLELDCDETNLRAVPSVSSNVTAMSLQWNLIRKLPPDCFKNYHDLQKLYLQNNKITSISIYAFRGLNSLTKLYLSHNRITFLKPGVFEDLHRLEWLIIEDNHLSRISPPTFYGLNSLILLVLMNNVLTRLPDKPLCQHMPRLHWLDLEGNHIHNLRNLTLISCSNLTVLVMGKNKINHLNENTFAPLQKLDELDLGSNKIENLPPLIFKDLKELSQLNLSYNPIQKIQANQFDYLVKLKSLSLEGIEISNIQQRMFRPLMNLSHIYFKKFQYCGYAPHVRSGKPNTDGISSLENLLASIIQRVFVWVVSAVTCFGNVFVICMRPYIRSENKLYAMSIISLCCADCLMGIYLFVIGGFDLKFRGEYNKHAQLWMESTHCQLVGSLAILSTEVSVLLLTFLTLEKYICIVYPFRCVRPGKCRTITVLILIWITGFIVAFIPLSNKEFFKNYYGTNGVCFPLHSEDTESIGAQVYSVAIFLGINLAAFIIIVFSYGSMFYSVHQSAITATEIRNQVKKEMILAKRFFFIVFTDALCWIPIFVVKFLSLLQVEIPGTITSWVVIFILPINSALNPILYTLTTRPFKEMIHRFWYNYRQRKSMDSKGQKTYAPSFIWVEMWPLQEMPPELMKPGLFTYPCEMSLISQSTRLNSYS</sequence>
<keyword id="KW-0106">Calcium</keyword>
<keyword id="KW-1003">Cell membrane</keyword>
<keyword id="KW-1015">Disulfide bond</keyword>
<keyword id="KW-0297">G-protein coupled receptor</keyword>
<keyword id="KW-0325">Glycoprotein</keyword>
<keyword id="KW-0433">Leucine-rich repeat</keyword>
<keyword id="KW-0472">Membrane</keyword>
<keyword id="KW-0479">Metal-binding</keyword>
<keyword id="KW-0675">Receptor</keyword>
<keyword id="KW-1185">Reference proteome</keyword>
<keyword id="KW-0677">Repeat</keyword>
<keyword id="KW-0807">Transducer</keyword>
<keyword id="KW-0812">Transmembrane</keyword>
<keyword id="KW-1133">Transmembrane helix</keyword>